<proteinExistence type="inferred from homology"/>
<organism>
    <name type="scientific">Geotalea uraniireducens (strain Rf4)</name>
    <name type="common">Geobacter uraniireducens</name>
    <dbReference type="NCBI Taxonomy" id="351605"/>
    <lineage>
        <taxon>Bacteria</taxon>
        <taxon>Pseudomonadati</taxon>
        <taxon>Thermodesulfobacteriota</taxon>
        <taxon>Desulfuromonadia</taxon>
        <taxon>Geobacterales</taxon>
        <taxon>Geobacteraceae</taxon>
        <taxon>Geotalea</taxon>
    </lineage>
</organism>
<gene>
    <name evidence="1" type="primary">fmt</name>
    <name type="ordered locus">Gura_0819</name>
</gene>
<name>FMT_GEOUR</name>
<sequence length="313" mass="33865">MAGMRIIFMGTPEFACPTLQKLLDRGEDVIAVITQPDRPKGRGQQTLPPPVKVLAERHGIPVMQPLKVRVPEVVESIRSLAPDLIVVVAFGQILPKSLLDIPKYGCINVHASLLPRWRGAAPLNWCIINGETETGVTTMMMDVGLDTGDMLVKRSTPIDPDENTQSLHDRLSVVGAEALAETLDLLTAGKLVREKQDDALTCYAPMLKKEDGLIDWSKEPQTIKNLVRGMTPWPGAFSFLDGKMLKIYRVGTAGGEGTPGSVIRAGREGLEVACSGGSIVIEELQLEGKKRLHAGDFLAGYKIAPGSILGKKD</sequence>
<reference key="1">
    <citation type="submission" date="2007-05" db="EMBL/GenBank/DDBJ databases">
        <title>Complete sequence of Geobacter uraniireducens Rf4.</title>
        <authorList>
            <consortium name="US DOE Joint Genome Institute"/>
            <person name="Copeland A."/>
            <person name="Lucas S."/>
            <person name="Lapidus A."/>
            <person name="Barry K."/>
            <person name="Detter J.C."/>
            <person name="Glavina del Rio T."/>
            <person name="Hammon N."/>
            <person name="Israni S."/>
            <person name="Dalin E."/>
            <person name="Tice H."/>
            <person name="Pitluck S."/>
            <person name="Chertkov O."/>
            <person name="Brettin T."/>
            <person name="Bruce D."/>
            <person name="Han C."/>
            <person name="Schmutz J."/>
            <person name="Larimer F."/>
            <person name="Land M."/>
            <person name="Hauser L."/>
            <person name="Kyrpides N."/>
            <person name="Mikhailova N."/>
            <person name="Shelobolina E."/>
            <person name="Aklujkar M."/>
            <person name="Lovley D."/>
            <person name="Richardson P."/>
        </authorList>
    </citation>
    <scope>NUCLEOTIDE SEQUENCE [LARGE SCALE GENOMIC DNA]</scope>
    <source>
        <strain>ATCC BAA-1134 / JCM 13001 / Rf4</strain>
    </source>
</reference>
<evidence type="ECO:0000255" key="1">
    <source>
        <dbReference type="HAMAP-Rule" id="MF_00182"/>
    </source>
</evidence>
<accession>A5GBL0</accession>
<keyword id="KW-0648">Protein biosynthesis</keyword>
<keyword id="KW-1185">Reference proteome</keyword>
<keyword id="KW-0808">Transferase</keyword>
<feature type="chain" id="PRO_1000077301" description="Methionyl-tRNA formyltransferase">
    <location>
        <begin position="1"/>
        <end position="313"/>
    </location>
</feature>
<feature type="binding site" evidence="1">
    <location>
        <begin position="112"/>
        <end position="115"/>
    </location>
    <ligand>
        <name>(6S)-5,6,7,8-tetrahydrofolate</name>
        <dbReference type="ChEBI" id="CHEBI:57453"/>
    </ligand>
</feature>
<dbReference type="EC" id="2.1.2.9" evidence="1"/>
<dbReference type="EMBL" id="CP000698">
    <property type="protein sequence ID" value="ABQ25027.1"/>
    <property type="molecule type" value="Genomic_DNA"/>
</dbReference>
<dbReference type="RefSeq" id="WP_011937751.1">
    <property type="nucleotide sequence ID" value="NC_009483.1"/>
</dbReference>
<dbReference type="SMR" id="A5GBL0"/>
<dbReference type="STRING" id="351605.Gura_0819"/>
<dbReference type="KEGG" id="gur:Gura_0819"/>
<dbReference type="HOGENOM" id="CLU_033347_1_1_7"/>
<dbReference type="OrthoDB" id="9802815at2"/>
<dbReference type="Proteomes" id="UP000006695">
    <property type="component" value="Chromosome"/>
</dbReference>
<dbReference type="GO" id="GO:0005829">
    <property type="term" value="C:cytosol"/>
    <property type="evidence" value="ECO:0007669"/>
    <property type="project" value="TreeGrafter"/>
</dbReference>
<dbReference type="GO" id="GO:0004479">
    <property type="term" value="F:methionyl-tRNA formyltransferase activity"/>
    <property type="evidence" value="ECO:0007669"/>
    <property type="project" value="UniProtKB-UniRule"/>
</dbReference>
<dbReference type="CDD" id="cd08646">
    <property type="entry name" value="FMT_core_Met-tRNA-FMT_N"/>
    <property type="match status" value="1"/>
</dbReference>
<dbReference type="CDD" id="cd08704">
    <property type="entry name" value="Met_tRNA_FMT_C"/>
    <property type="match status" value="1"/>
</dbReference>
<dbReference type="FunFam" id="3.40.50.12230:FF:000001">
    <property type="entry name" value="Methionyl-tRNA formyltransferase"/>
    <property type="match status" value="1"/>
</dbReference>
<dbReference type="Gene3D" id="3.40.50.12230">
    <property type="match status" value="1"/>
</dbReference>
<dbReference type="HAMAP" id="MF_00182">
    <property type="entry name" value="Formyl_trans"/>
    <property type="match status" value="1"/>
</dbReference>
<dbReference type="InterPro" id="IPR005794">
    <property type="entry name" value="Fmt"/>
</dbReference>
<dbReference type="InterPro" id="IPR005793">
    <property type="entry name" value="Formyl_trans_C"/>
</dbReference>
<dbReference type="InterPro" id="IPR002376">
    <property type="entry name" value="Formyl_transf_N"/>
</dbReference>
<dbReference type="InterPro" id="IPR036477">
    <property type="entry name" value="Formyl_transf_N_sf"/>
</dbReference>
<dbReference type="InterPro" id="IPR011034">
    <property type="entry name" value="Formyl_transferase-like_C_sf"/>
</dbReference>
<dbReference type="InterPro" id="IPR044135">
    <property type="entry name" value="Met-tRNA-FMT_C"/>
</dbReference>
<dbReference type="InterPro" id="IPR041711">
    <property type="entry name" value="Met-tRNA-FMT_N"/>
</dbReference>
<dbReference type="NCBIfam" id="TIGR00460">
    <property type="entry name" value="fmt"/>
    <property type="match status" value="1"/>
</dbReference>
<dbReference type="PANTHER" id="PTHR11138">
    <property type="entry name" value="METHIONYL-TRNA FORMYLTRANSFERASE"/>
    <property type="match status" value="1"/>
</dbReference>
<dbReference type="PANTHER" id="PTHR11138:SF5">
    <property type="entry name" value="METHIONYL-TRNA FORMYLTRANSFERASE, MITOCHONDRIAL"/>
    <property type="match status" value="1"/>
</dbReference>
<dbReference type="Pfam" id="PF02911">
    <property type="entry name" value="Formyl_trans_C"/>
    <property type="match status" value="1"/>
</dbReference>
<dbReference type="Pfam" id="PF00551">
    <property type="entry name" value="Formyl_trans_N"/>
    <property type="match status" value="1"/>
</dbReference>
<dbReference type="SUPFAM" id="SSF50486">
    <property type="entry name" value="FMT C-terminal domain-like"/>
    <property type="match status" value="1"/>
</dbReference>
<dbReference type="SUPFAM" id="SSF53328">
    <property type="entry name" value="Formyltransferase"/>
    <property type="match status" value="1"/>
</dbReference>
<protein>
    <recommendedName>
        <fullName evidence="1">Methionyl-tRNA formyltransferase</fullName>
        <ecNumber evidence="1">2.1.2.9</ecNumber>
    </recommendedName>
</protein>
<comment type="function">
    <text evidence="1">Attaches a formyl group to the free amino group of methionyl-tRNA(fMet). The formyl group appears to play a dual role in the initiator identity of N-formylmethionyl-tRNA by promoting its recognition by IF2 and preventing the misappropriation of this tRNA by the elongation apparatus.</text>
</comment>
<comment type="catalytic activity">
    <reaction evidence="1">
        <text>L-methionyl-tRNA(fMet) + (6R)-10-formyltetrahydrofolate = N-formyl-L-methionyl-tRNA(fMet) + (6S)-5,6,7,8-tetrahydrofolate + H(+)</text>
        <dbReference type="Rhea" id="RHEA:24380"/>
        <dbReference type="Rhea" id="RHEA-COMP:9952"/>
        <dbReference type="Rhea" id="RHEA-COMP:9953"/>
        <dbReference type="ChEBI" id="CHEBI:15378"/>
        <dbReference type="ChEBI" id="CHEBI:57453"/>
        <dbReference type="ChEBI" id="CHEBI:78530"/>
        <dbReference type="ChEBI" id="CHEBI:78844"/>
        <dbReference type="ChEBI" id="CHEBI:195366"/>
        <dbReference type="EC" id="2.1.2.9"/>
    </reaction>
</comment>
<comment type="similarity">
    <text evidence="1">Belongs to the Fmt family.</text>
</comment>